<gene>
    <name evidence="1" type="primary">pyrG</name>
    <name type="ordered locus">Mrad2831_3107</name>
</gene>
<sequence>MTRYVFITGGVVSSLGKGLASAALAAVLQARGYRVRMRKLDPYLNVDPGTMSPTQHGEVFVTDDGAETDLDLGHYERFTGVPASRADNITTGRIYQDIIAKERRGDYLGATIQVIPHVTNAIKDFVLDGNDSFDFVLVEIGGTVGDIEGLPFFEAIRQLGQELPRGTCCYVHLTLLPYIPSAGELKTKPTQHSVKELRSIGIQPDILLCRCDRPIPMDERRKLALFCNVRQTAVIEALDVASIYEVPLSYRTAGLDREVLGHFGLEHGEEPDLGRWQTIAERVRNPEGEVSIAIVGKYTGLKDAYKSLTEALTHGGISHRVKVNLEWIEAEVFEREDPAPFLEGLNGILVPGGFGQRGAEGKIRAARYAREKRIPYLGICFGMQMAVIEAARSLAGMPEANSTEFGETAEPVVGLLTEWLRGNELERRAAAGDLGGTMRLGAYEAKLDPESKIAQIYGSEQISERHRHRYEVNMAYRERLEAKGLRFSGVSPDGLLPETVEHVGHPWFIGVQFHPELKSRPFEPHPLFKGFVGAAIEQSRLV</sequence>
<reference key="1">
    <citation type="submission" date="2008-03" db="EMBL/GenBank/DDBJ databases">
        <title>Complete sequence of chromosome of Methylobacterium radiotolerans JCM 2831.</title>
        <authorList>
            <consortium name="US DOE Joint Genome Institute"/>
            <person name="Copeland A."/>
            <person name="Lucas S."/>
            <person name="Lapidus A."/>
            <person name="Glavina del Rio T."/>
            <person name="Dalin E."/>
            <person name="Tice H."/>
            <person name="Bruce D."/>
            <person name="Goodwin L."/>
            <person name="Pitluck S."/>
            <person name="Kiss H."/>
            <person name="Brettin T."/>
            <person name="Detter J.C."/>
            <person name="Han C."/>
            <person name="Kuske C.R."/>
            <person name="Schmutz J."/>
            <person name="Larimer F."/>
            <person name="Land M."/>
            <person name="Hauser L."/>
            <person name="Kyrpides N."/>
            <person name="Mikhailova N."/>
            <person name="Marx C.J."/>
            <person name="Richardson P."/>
        </authorList>
    </citation>
    <scope>NUCLEOTIDE SEQUENCE [LARGE SCALE GENOMIC DNA]</scope>
    <source>
        <strain>ATCC 27329 / DSM 1819 / JCM 2831 / NBRC 15690 / NCIMB 10815 / 0-1</strain>
    </source>
</reference>
<feature type="chain" id="PRO_1000139488" description="CTP synthase">
    <location>
        <begin position="1"/>
        <end position="542"/>
    </location>
</feature>
<feature type="domain" description="Glutamine amidotransferase type-1" evidence="1">
    <location>
        <begin position="291"/>
        <end position="541"/>
    </location>
</feature>
<feature type="region of interest" description="Amidoligase domain" evidence="1">
    <location>
        <begin position="1"/>
        <end position="265"/>
    </location>
</feature>
<feature type="active site" description="Nucleophile; for glutamine hydrolysis" evidence="1">
    <location>
        <position position="380"/>
    </location>
</feature>
<feature type="active site" evidence="1">
    <location>
        <position position="514"/>
    </location>
</feature>
<feature type="active site" evidence="1">
    <location>
        <position position="516"/>
    </location>
</feature>
<feature type="binding site" evidence="1">
    <location>
        <position position="13"/>
    </location>
    <ligand>
        <name>CTP</name>
        <dbReference type="ChEBI" id="CHEBI:37563"/>
        <note>allosteric inhibitor</note>
    </ligand>
</feature>
<feature type="binding site" evidence="1">
    <location>
        <position position="13"/>
    </location>
    <ligand>
        <name>UTP</name>
        <dbReference type="ChEBI" id="CHEBI:46398"/>
    </ligand>
</feature>
<feature type="binding site" evidence="1">
    <location>
        <begin position="14"/>
        <end position="19"/>
    </location>
    <ligand>
        <name>ATP</name>
        <dbReference type="ChEBI" id="CHEBI:30616"/>
    </ligand>
</feature>
<feature type="binding site" evidence="1">
    <location>
        <position position="71"/>
    </location>
    <ligand>
        <name>ATP</name>
        <dbReference type="ChEBI" id="CHEBI:30616"/>
    </ligand>
</feature>
<feature type="binding site" evidence="1">
    <location>
        <position position="71"/>
    </location>
    <ligand>
        <name>Mg(2+)</name>
        <dbReference type="ChEBI" id="CHEBI:18420"/>
    </ligand>
</feature>
<feature type="binding site" evidence="1">
    <location>
        <position position="139"/>
    </location>
    <ligand>
        <name>Mg(2+)</name>
        <dbReference type="ChEBI" id="CHEBI:18420"/>
    </ligand>
</feature>
<feature type="binding site" evidence="1">
    <location>
        <begin position="146"/>
        <end position="148"/>
    </location>
    <ligand>
        <name>CTP</name>
        <dbReference type="ChEBI" id="CHEBI:37563"/>
        <note>allosteric inhibitor</note>
    </ligand>
</feature>
<feature type="binding site" evidence="1">
    <location>
        <begin position="186"/>
        <end position="191"/>
    </location>
    <ligand>
        <name>CTP</name>
        <dbReference type="ChEBI" id="CHEBI:37563"/>
        <note>allosteric inhibitor</note>
    </ligand>
</feature>
<feature type="binding site" evidence="1">
    <location>
        <begin position="186"/>
        <end position="191"/>
    </location>
    <ligand>
        <name>UTP</name>
        <dbReference type="ChEBI" id="CHEBI:46398"/>
    </ligand>
</feature>
<feature type="binding site" evidence="1">
    <location>
        <position position="222"/>
    </location>
    <ligand>
        <name>CTP</name>
        <dbReference type="ChEBI" id="CHEBI:37563"/>
        <note>allosteric inhibitor</note>
    </ligand>
</feature>
<feature type="binding site" evidence="1">
    <location>
        <position position="222"/>
    </location>
    <ligand>
        <name>UTP</name>
        <dbReference type="ChEBI" id="CHEBI:46398"/>
    </ligand>
</feature>
<feature type="binding site" evidence="1">
    <location>
        <position position="353"/>
    </location>
    <ligand>
        <name>L-glutamine</name>
        <dbReference type="ChEBI" id="CHEBI:58359"/>
    </ligand>
</feature>
<feature type="binding site" evidence="1">
    <location>
        <begin position="381"/>
        <end position="384"/>
    </location>
    <ligand>
        <name>L-glutamine</name>
        <dbReference type="ChEBI" id="CHEBI:58359"/>
    </ligand>
</feature>
<feature type="binding site" evidence="1">
    <location>
        <position position="404"/>
    </location>
    <ligand>
        <name>L-glutamine</name>
        <dbReference type="ChEBI" id="CHEBI:58359"/>
    </ligand>
</feature>
<feature type="binding site" evidence="1">
    <location>
        <position position="469"/>
    </location>
    <ligand>
        <name>L-glutamine</name>
        <dbReference type="ChEBI" id="CHEBI:58359"/>
    </ligand>
</feature>
<proteinExistence type="inferred from homology"/>
<organism>
    <name type="scientific">Methylobacterium radiotolerans (strain ATCC 27329 / DSM 1819 / JCM 2831 / NBRC 15690 / NCIMB 10815 / 0-1)</name>
    <dbReference type="NCBI Taxonomy" id="426355"/>
    <lineage>
        <taxon>Bacteria</taxon>
        <taxon>Pseudomonadati</taxon>
        <taxon>Pseudomonadota</taxon>
        <taxon>Alphaproteobacteria</taxon>
        <taxon>Hyphomicrobiales</taxon>
        <taxon>Methylobacteriaceae</taxon>
        <taxon>Methylobacterium</taxon>
    </lineage>
</organism>
<evidence type="ECO:0000255" key="1">
    <source>
        <dbReference type="HAMAP-Rule" id="MF_01227"/>
    </source>
</evidence>
<protein>
    <recommendedName>
        <fullName evidence="1">CTP synthase</fullName>
        <ecNumber evidence="1">6.3.4.2</ecNumber>
    </recommendedName>
    <alternativeName>
        <fullName evidence="1">Cytidine 5'-triphosphate synthase</fullName>
    </alternativeName>
    <alternativeName>
        <fullName evidence="1">Cytidine triphosphate synthetase</fullName>
        <shortName evidence="1">CTP synthetase</shortName>
        <shortName evidence="1">CTPS</shortName>
    </alternativeName>
    <alternativeName>
        <fullName evidence="1">UTP--ammonia ligase</fullName>
    </alternativeName>
</protein>
<dbReference type="EC" id="6.3.4.2" evidence="1"/>
<dbReference type="EMBL" id="CP001001">
    <property type="protein sequence ID" value="ACB25089.1"/>
    <property type="molecule type" value="Genomic_DNA"/>
</dbReference>
<dbReference type="RefSeq" id="WP_012320054.1">
    <property type="nucleotide sequence ID" value="NC_010505.1"/>
</dbReference>
<dbReference type="SMR" id="B1M5Q9"/>
<dbReference type="STRING" id="426355.Mrad2831_3107"/>
<dbReference type="MEROPS" id="C26.964"/>
<dbReference type="GeneID" id="6139153"/>
<dbReference type="KEGG" id="mrd:Mrad2831_3107"/>
<dbReference type="eggNOG" id="COG0504">
    <property type="taxonomic scope" value="Bacteria"/>
</dbReference>
<dbReference type="HOGENOM" id="CLU_011675_5_0_5"/>
<dbReference type="OrthoDB" id="9801107at2"/>
<dbReference type="UniPathway" id="UPA00159">
    <property type="reaction ID" value="UER00277"/>
</dbReference>
<dbReference type="Proteomes" id="UP000006589">
    <property type="component" value="Chromosome"/>
</dbReference>
<dbReference type="GO" id="GO:0005829">
    <property type="term" value="C:cytosol"/>
    <property type="evidence" value="ECO:0007669"/>
    <property type="project" value="TreeGrafter"/>
</dbReference>
<dbReference type="GO" id="GO:0005524">
    <property type="term" value="F:ATP binding"/>
    <property type="evidence" value="ECO:0007669"/>
    <property type="project" value="UniProtKB-KW"/>
</dbReference>
<dbReference type="GO" id="GO:0003883">
    <property type="term" value="F:CTP synthase activity"/>
    <property type="evidence" value="ECO:0007669"/>
    <property type="project" value="UniProtKB-UniRule"/>
</dbReference>
<dbReference type="GO" id="GO:0004359">
    <property type="term" value="F:glutaminase activity"/>
    <property type="evidence" value="ECO:0007669"/>
    <property type="project" value="RHEA"/>
</dbReference>
<dbReference type="GO" id="GO:0042802">
    <property type="term" value="F:identical protein binding"/>
    <property type="evidence" value="ECO:0007669"/>
    <property type="project" value="TreeGrafter"/>
</dbReference>
<dbReference type="GO" id="GO:0046872">
    <property type="term" value="F:metal ion binding"/>
    <property type="evidence" value="ECO:0007669"/>
    <property type="project" value="UniProtKB-KW"/>
</dbReference>
<dbReference type="GO" id="GO:0044210">
    <property type="term" value="P:'de novo' CTP biosynthetic process"/>
    <property type="evidence" value="ECO:0007669"/>
    <property type="project" value="UniProtKB-UniRule"/>
</dbReference>
<dbReference type="GO" id="GO:0019856">
    <property type="term" value="P:pyrimidine nucleobase biosynthetic process"/>
    <property type="evidence" value="ECO:0007669"/>
    <property type="project" value="TreeGrafter"/>
</dbReference>
<dbReference type="CDD" id="cd03113">
    <property type="entry name" value="CTPS_N"/>
    <property type="match status" value="1"/>
</dbReference>
<dbReference type="CDD" id="cd01746">
    <property type="entry name" value="GATase1_CTP_Synthase"/>
    <property type="match status" value="1"/>
</dbReference>
<dbReference type="FunFam" id="3.40.50.300:FF:000009">
    <property type="entry name" value="CTP synthase"/>
    <property type="match status" value="1"/>
</dbReference>
<dbReference type="FunFam" id="3.40.50.880:FF:000002">
    <property type="entry name" value="CTP synthase"/>
    <property type="match status" value="1"/>
</dbReference>
<dbReference type="Gene3D" id="3.40.50.880">
    <property type="match status" value="1"/>
</dbReference>
<dbReference type="Gene3D" id="3.40.50.300">
    <property type="entry name" value="P-loop containing nucleotide triphosphate hydrolases"/>
    <property type="match status" value="1"/>
</dbReference>
<dbReference type="HAMAP" id="MF_01227">
    <property type="entry name" value="PyrG"/>
    <property type="match status" value="1"/>
</dbReference>
<dbReference type="InterPro" id="IPR029062">
    <property type="entry name" value="Class_I_gatase-like"/>
</dbReference>
<dbReference type="InterPro" id="IPR004468">
    <property type="entry name" value="CTP_synthase"/>
</dbReference>
<dbReference type="InterPro" id="IPR017456">
    <property type="entry name" value="CTP_synthase_N"/>
</dbReference>
<dbReference type="InterPro" id="IPR017926">
    <property type="entry name" value="GATASE"/>
</dbReference>
<dbReference type="InterPro" id="IPR033828">
    <property type="entry name" value="GATase1_CTP_Synthase"/>
</dbReference>
<dbReference type="InterPro" id="IPR027417">
    <property type="entry name" value="P-loop_NTPase"/>
</dbReference>
<dbReference type="NCBIfam" id="NF003792">
    <property type="entry name" value="PRK05380.1"/>
    <property type="match status" value="1"/>
</dbReference>
<dbReference type="NCBIfam" id="TIGR00337">
    <property type="entry name" value="PyrG"/>
    <property type="match status" value="1"/>
</dbReference>
<dbReference type="PANTHER" id="PTHR11550">
    <property type="entry name" value="CTP SYNTHASE"/>
    <property type="match status" value="1"/>
</dbReference>
<dbReference type="PANTHER" id="PTHR11550:SF0">
    <property type="entry name" value="CTP SYNTHASE-RELATED"/>
    <property type="match status" value="1"/>
</dbReference>
<dbReference type="Pfam" id="PF06418">
    <property type="entry name" value="CTP_synth_N"/>
    <property type="match status" value="1"/>
</dbReference>
<dbReference type="Pfam" id="PF00117">
    <property type="entry name" value="GATase"/>
    <property type="match status" value="1"/>
</dbReference>
<dbReference type="SUPFAM" id="SSF52317">
    <property type="entry name" value="Class I glutamine amidotransferase-like"/>
    <property type="match status" value="1"/>
</dbReference>
<dbReference type="SUPFAM" id="SSF52540">
    <property type="entry name" value="P-loop containing nucleoside triphosphate hydrolases"/>
    <property type="match status" value="1"/>
</dbReference>
<dbReference type="PROSITE" id="PS51273">
    <property type="entry name" value="GATASE_TYPE_1"/>
    <property type="match status" value="1"/>
</dbReference>
<comment type="function">
    <text evidence="1">Catalyzes the ATP-dependent amination of UTP to CTP with either L-glutamine or ammonia as the source of nitrogen. Regulates intracellular CTP levels through interactions with the four ribonucleotide triphosphates.</text>
</comment>
<comment type="catalytic activity">
    <reaction evidence="1">
        <text>UTP + L-glutamine + ATP + H2O = CTP + L-glutamate + ADP + phosphate + 2 H(+)</text>
        <dbReference type="Rhea" id="RHEA:26426"/>
        <dbReference type="ChEBI" id="CHEBI:15377"/>
        <dbReference type="ChEBI" id="CHEBI:15378"/>
        <dbReference type="ChEBI" id="CHEBI:29985"/>
        <dbReference type="ChEBI" id="CHEBI:30616"/>
        <dbReference type="ChEBI" id="CHEBI:37563"/>
        <dbReference type="ChEBI" id="CHEBI:43474"/>
        <dbReference type="ChEBI" id="CHEBI:46398"/>
        <dbReference type="ChEBI" id="CHEBI:58359"/>
        <dbReference type="ChEBI" id="CHEBI:456216"/>
        <dbReference type="EC" id="6.3.4.2"/>
    </reaction>
</comment>
<comment type="catalytic activity">
    <reaction evidence="1">
        <text>L-glutamine + H2O = L-glutamate + NH4(+)</text>
        <dbReference type="Rhea" id="RHEA:15889"/>
        <dbReference type="ChEBI" id="CHEBI:15377"/>
        <dbReference type="ChEBI" id="CHEBI:28938"/>
        <dbReference type="ChEBI" id="CHEBI:29985"/>
        <dbReference type="ChEBI" id="CHEBI:58359"/>
    </reaction>
</comment>
<comment type="catalytic activity">
    <reaction evidence="1">
        <text>UTP + NH4(+) + ATP = CTP + ADP + phosphate + 2 H(+)</text>
        <dbReference type="Rhea" id="RHEA:16597"/>
        <dbReference type="ChEBI" id="CHEBI:15378"/>
        <dbReference type="ChEBI" id="CHEBI:28938"/>
        <dbReference type="ChEBI" id="CHEBI:30616"/>
        <dbReference type="ChEBI" id="CHEBI:37563"/>
        <dbReference type="ChEBI" id="CHEBI:43474"/>
        <dbReference type="ChEBI" id="CHEBI:46398"/>
        <dbReference type="ChEBI" id="CHEBI:456216"/>
    </reaction>
</comment>
<comment type="activity regulation">
    <text evidence="1">Allosterically activated by GTP, when glutamine is the substrate; GTP has no effect on the reaction when ammonia is the substrate. The allosteric effector GTP functions by stabilizing the protein conformation that binds the tetrahedral intermediate(s) formed during glutamine hydrolysis. Inhibited by the product CTP, via allosteric rather than competitive inhibition.</text>
</comment>
<comment type="pathway">
    <text evidence="1">Pyrimidine metabolism; CTP biosynthesis via de novo pathway; CTP from UDP: step 2/2.</text>
</comment>
<comment type="subunit">
    <text evidence="1">Homotetramer.</text>
</comment>
<comment type="miscellaneous">
    <text evidence="1">CTPSs have evolved a hybrid strategy for distinguishing between UTP and CTP. The overlapping regions of the product feedback inhibitory and substrate sites recognize a common feature in both compounds, the triphosphate moiety. To differentiate isosteric substrate and product pyrimidine rings, an additional pocket far from the expected kinase/ligase catalytic site, specifically recognizes the cytosine and ribose portions of the product inhibitor.</text>
</comment>
<comment type="similarity">
    <text evidence="1">Belongs to the CTP synthase family.</text>
</comment>
<keyword id="KW-0067">ATP-binding</keyword>
<keyword id="KW-0315">Glutamine amidotransferase</keyword>
<keyword id="KW-0436">Ligase</keyword>
<keyword id="KW-0460">Magnesium</keyword>
<keyword id="KW-0479">Metal-binding</keyword>
<keyword id="KW-0547">Nucleotide-binding</keyword>
<keyword id="KW-0665">Pyrimidine biosynthesis</keyword>
<accession>B1M5Q9</accession>
<name>PYRG_METRJ</name>